<gene>
    <name type="primary">Raet1e</name>
</gene>
<keyword id="KW-1003">Cell membrane</keyword>
<keyword id="KW-1015">Disulfide bond</keyword>
<keyword id="KW-0325">Glycoprotein</keyword>
<keyword id="KW-0336">GPI-anchor</keyword>
<keyword id="KW-0449">Lipoprotein</keyword>
<keyword id="KW-0472">Membrane</keyword>
<keyword id="KW-1185">Reference proteome</keyword>
<keyword id="KW-0732">Signal</keyword>
<reference evidence="7" key="1">
    <citation type="journal article" date="2001" name="Science">
        <title>Regulation of cutaneous malignancy by gammadelta T cells.</title>
        <authorList>
            <person name="Girardi M."/>
            <person name="Oppenheim D.E."/>
            <person name="Steele C.R."/>
            <person name="Lewis J.M."/>
            <person name="Glusac E."/>
            <person name="Filler R."/>
            <person name="Hobby P."/>
            <person name="Sutton B."/>
            <person name="Tigelaar R.E."/>
            <person name="Hayday A.C."/>
        </authorList>
    </citation>
    <scope>NUCLEOTIDE SEQUENCE [MRNA]</scope>
    <scope>FUNCTION</scope>
    <source>
        <strain evidence="9">C57BL/10</strain>
        <tissue evidence="9">Squamous cell carcinoma</tissue>
    </source>
</reference>
<reference evidence="7" key="2">
    <citation type="submission" date="2001-08" db="EMBL/GenBank/DDBJ databases">
        <authorList>
            <person name="Lanier L.L."/>
        </authorList>
    </citation>
    <scope>NUCLEOTIDE SEQUENCE [MRNA]</scope>
    <source>
        <strain evidence="8">C57BL/6J</strain>
        <tissue evidence="8">Lung</tissue>
    </source>
</reference>
<reference key="3">
    <citation type="journal article" date="2005" name="Science">
        <title>The transcriptional landscape of the mammalian genome.</title>
        <authorList>
            <person name="Carninci P."/>
            <person name="Kasukawa T."/>
            <person name="Katayama S."/>
            <person name="Gough J."/>
            <person name="Frith M.C."/>
            <person name="Maeda N."/>
            <person name="Oyama R."/>
            <person name="Ravasi T."/>
            <person name="Lenhard B."/>
            <person name="Wells C."/>
            <person name="Kodzius R."/>
            <person name="Shimokawa K."/>
            <person name="Bajic V.B."/>
            <person name="Brenner S.E."/>
            <person name="Batalov S."/>
            <person name="Forrest A.R."/>
            <person name="Zavolan M."/>
            <person name="Davis M.J."/>
            <person name="Wilming L.G."/>
            <person name="Aidinis V."/>
            <person name="Allen J.E."/>
            <person name="Ambesi-Impiombato A."/>
            <person name="Apweiler R."/>
            <person name="Aturaliya R.N."/>
            <person name="Bailey T.L."/>
            <person name="Bansal M."/>
            <person name="Baxter L."/>
            <person name="Beisel K.W."/>
            <person name="Bersano T."/>
            <person name="Bono H."/>
            <person name="Chalk A.M."/>
            <person name="Chiu K.P."/>
            <person name="Choudhary V."/>
            <person name="Christoffels A."/>
            <person name="Clutterbuck D.R."/>
            <person name="Crowe M.L."/>
            <person name="Dalla E."/>
            <person name="Dalrymple B.P."/>
            <person name="de Bono B."/>
            <person name="Della Gatta G."/>
            <person name="di Bernardo D."/>
            <person name="Down T."/>
            <person name="Engstrom P."/>
            <person name="Fagiolini M."/>
            <person name="Faulkner G."/>
            <person name="Fletcher C.F."/>
            <person name="Fukushima T."/>
            <person name="Furuno M."/>
            <person name="Futaki S."/>
            <person name="Gariboldi M."/>
            <person name="Georgii-Hemming P."/>
            <person name="Gingeras T.R."/>
            <person name="Gojobori T."/>
            <person name="Green R.E."/>
            <person name="Gustincich S."/>
            <person name="Harbers M."/>
            <person name="Hayashi Y."/>
            <person name="Hensch T.K."/>
            <person name="Hirokawa N."/>
            <person name="Hill D."/>
            <person name="Huminiecki L."/>
            <person name="Iacono M."/>
            <person name="Ikeo K."/>
            <person name="Iwama A."/>
            <person name="Ishikawa T."/>
            <person name="Jakt M."/>
            <person name="Kanapin A."/>
            <person name="Katoh M."/>
            <person name="Kawasawa Y."/>
            <person name="Kelso J."/>
            <person name="Kitamura H."/>
            <person name="Kitano H."/>
            <person name="Kollias G."/>
            <person name="Krishnan S.P."/>
            <person name="Kruger A."/>
            <person name="Kummerfeld S.K."/>
            <person name="Kurochkin I.V."/>
            <person name="Lareau L.F."/>
            <person name="Lazarevic D."/>
            <person name="Lipovich L."/>
            <person name="Liu J."/>
            <person name="Liuni S."/>
            <person name="McWilliam S."/>
            <person name="Madan Babu M."/>
            <person name="Madera M."/>
            <person name="Marchionni L."/>
            <person name="Matsuda H."/>
            <person name="Matsuzawa S."/>
            <person name="Miki H."/>
            <person name="Mignone F."/>
            <person name="Miyake S."/>
            <person name="Morris K."/>
            <person name="Mottagui-Tabar S."/>
            <person name="Mulder N."/>
            <person name="Nakano N."/>
            <person name="Nakauchi H."/>
            <person name="Ng P."/>
            <person name="Nilsson R."/>
            <person name="Nishiguchi S."/>
            <person name="Nishikawa S."/>
            <person name="Nori F."/>
            <person name="Ohara O."/>
            <person name="Okazaki Y."/>
            <person name="Orlando V."/>
            <person name="Pang K.C."/>
            <person name="Pavan W.J."/>
            <person name="Pavesi G."/>
            <person name="Pesole G."/>
            <person name="Petrovsky N."/>
            <person name="Piazza S."/>
            <person name="Reed J."/>
            <person name="Reid J.F."/>
            <person name="Ring B.Z."/>
            <person name="Ringwald M."/>
            <person name="Rost B."/>
            <person name="Ruan Y."/>
            <person name="Salzberg S.L."/>
            <person name="Sandelin A."/>
            <person name="Schneider C."/>
            <person name="Schoenbach C."/>
            <person name="Sekiguchi K."/>
            <person name="Semple C.A."/>
            <person name="Seno S."/>
            <person name="Sessa L."/>
            <person name="Sheng Y."/>
            <person name="Shibata Y."/>
            <person name="Shimada H."/>
            <person name="Shimada K."/>
            <person name="Silva D."/>
            <person name="Sinclair B."/>
            <person name="Sperling S."/>
            <person name="Stupka E."/>
            <person name="Sugiura K."/>
            <person name="Sultana R."/>
            <person name="Takenaka Y."/>
            <person name="Taki K."/>
            <person name="Tammoja K."/>
            <person name="Tan S.L."/>
            <person name="Tang S."/>
            <person name="Taylor M.S."/>
            <person name="Tegner J."/>
            <person name="Teichmann S.A."/>
            <person name="Ueda H.R."/>
            <person name="van Nimwegen E."/>
            <person name="Verardo R."/>
            <person name="Wei C.L."/>
            <person name="Yagi K."/>
            <person name="Yamanishi H."/>
            <person name="Zabarovsky E."/>
            <person name="Zhu S."/>
            <person name="Zimmer A."/>
            <person name="Hide W."/>
            <person name="Bult C."/>
            <person name="Grimmond S.M."/>
            <person name="Teasdale R.D."/>
            <person name="Liu E.T."/>
            <person name="Brusic V."/>
            <person name="Quackenbush J."/>
            <person name="Wahlestedt C."/>
            <person name="Mattick J.S."/>
            <person name="Hume D.A."/>
            <person name="Kai C."/>
            <person name="Sasaki D."/>
            <person name="Tomaru Y."/>
            <person name="Fukuda S."/>
            <person name="Kanamori-Katayama M."/>
            <person name="Suzuki M."/>
            <person name="Aoki J."/>
            <person name="Arakawa T."/>
            <person name="Iida J."/>
            <person name="Imamura K."/>
            <person name="Itoh M."/>
            <person name="Kato T."/>
            <person name="Kawaji H."/>
            <person name="Kawagashira N."/>
            <person name="Kawashima T."/>
            <person name="Kojima M."/>
            <person name="Kondo S."/>
            <person name="Konno H."/>
            <person name="Nakano K."/>
            <person name="Ninomiya N."/>
            <person name="Nishio T."/>
            <person name="Okada M."/>
            <person name="Plessy C."/>
            <person name="Shibata K."/>
            <person name="Shiraki T."/>
            <person name="Suzuki S."/>
            <person name="Tagami M."/>
            <person name="Waki K."/>
            <person name="Watahiki A."/>
            <person name="Okamura-Oho Y."/>
            <person name="Suzuki H."/>
            <person name="Kawai J."/>
            <person name="Hayashizaki Y."/>
        </authorList>
    </citation>
    <scope>NUCLEOTIDE SEQUENCE [LARGE SCALE MRNA]</scope>
    <source>
        <strain>C57BL/6J</strain>
        <tissue>Embryo</tissue>
    </source>
</reference>
<reference key="4">
    <citation type="journal article" date="2004" name="Genome Res.">
        <title>The status, quality, and expansion of the NIH full-length cDNA project: the Mammalian Gene Collection (MGC).</title>
        <authorList>
            <consortium name="The MGC Project Team"/>
        </authorList>
    </citation>
    <scope>NUCLEOTIDE SEQUENCE [LARGE SCALE MRNA]</scope>
    <source>
        <tissue>Brain</tissue>
    </source>
</reference>
<reference key="5">
    <citation type="journal article" date="2005" name="Nat. Immunol.">
        <title>Function of NKG2D in natural killer cell-mediated rejection of mouse bone marrow grafts.</title>
        <authorList>
            <person name="Ogasawara K."/>
            <person name="Benjamin J."/>
            <person name="Takaki R."/>
            <person name="Phillips J.H."/>
            <person name="Lanier L.L."/>
        </authorList>
    </citation>
    <scope>FUNCTION AS A LIGAND FOR KLRK1</scope>
</reference>
<feature type="signal peptide" evidence="3">
    <location>
        <begin position="1"/>
        <end position="28"/>
    </location>
</feature>
<feature type="chain" id="PRO_0000019735" description="Retinoic acid early-inducible protein 1-epsilon">
    <location>
        <begin position="29"/>
        <end position="225"/>
    </location>
</feature>
<feature type="propeptide" id="PRO_0000019736" description="Removed in mature form" evidence="3">
    <location>
        <begin position="226"/>
        <end position="251"/>
    </location>
</feature>
<feature type="region of interest" description="Disordered" evidence="4">
    <location>
        <begin position="196"/>
        <end position="228"/>
    </location>
</feature>
<feature type="compositionally biased region" description="Low complexity" evidence="4">
    <location>
        <begin position="209"/>
        <end position="219"/>
    </location>
</feature>
<feature type="lipid moiety-binding region" description="GPI-anchor amidated serine" evidence="3">
    <location>
        <position position="225"/>
    </location>
</feature>
<feature type="glycosylation site" description="N-linked (GlcNAc...) asparagine" evidence="3">
    <location>
        <position position="38"/>
    </location>
</feature>
<feature type="glycosylation site" description="N-linked (GlcNAc...) asparagine" evidence="3">
    <location>
        <position position="70"/>
    </location>
</feature>
<feature type="glycosylation site" description="N-linked (GlcNAc...) asparagine" evidence="3">
    <location>
        <position position="83"/>
    </location>
</feature>
<feature type="glycosylation site" description="N-linked (GlcNAc...) asparagine" evidence="3">
    <location>
        <position position="141"/>
    </location>
</feature>
<feature type="glycosylation site" description="N-linked (GlcNAc...) asparagine" evidence="3">
    <location>
        <position position="154"/>
    </location>
</feature>
<feature type="disulfide bond" evidence="1">
    <location>
        <begin position="37"/>
        <end position="56"/>
    </location>
</feature>
<feature type="disulfide bond" evidence="1">
    <location>
        <begin position="88"/>
        <end position="188"/>
    </location>
</feature>
<dbReference type="EMBL" id="AY056835">
    <property type="protein sequence ID" value="AAL17719.1"/>
    <property type="molecule type" value="mRNA"/>
</dbReference>
<dbReference type="EMBL" id="AY054973">
    <property type="protein sequence ID" value="AAL11004.1"/>
    <property type="molecule type" value="mRNA"/>
</dbReference>
<dbReference type="EMBL" id="AK012289">
    <property type="protein sequence ID" value="BAB28147.1"/>
    <property type="molecule type" value="mRNA"/>
</dbReference>
<dbReference type="EMBL" id="BC132308">
    <property type="protein sequence ID" value="AAI32309.1"/>
    <property type="molecule type" value="mRNA"/>
</dbReference>
<dbReference type="CCDS" id="CCDS35865.1"/>
<dbReference type="RefSeq" id="NP_001346737.1">
    <property type="nucleotide sequence ID" value="NM_001359808.1"/>
</dbReference>
<dbReference type="RefSeq" id="NP_001346738.1">
    <property type="nucleotide sequence ID" value="NM_001359809.1"/>
</dbReference>
<dbReference type="RefSeq" id="NP_937836.1">
    <property type="nucleotide sequence ID" value="NM_198193.3"/>
</dbReference>
<dbReference type="RefSeq" id="XP_006512840.1">
    <property type="nucleotide sequence ID" value="XM_006512777.2"/>
</dbReference>
<dbReference type="RefSeq" id="XP_006512842.1">
    <property type="nucleotide sequence ID" value="XM_006512779.2"/>
</dbReference>
<dbReference type="RefSeq" id="XP_006512843.1">
    <property type="nucleotide sequence ID" value="XM_006512780.3"/>
</dbReference>
<dbReference type="RefSeq" id="XP_006512845.1">
    <property type="nucleotide sequence ID" value="XM_006512782.2"/>
</dbReference>
<dbReference type="RefSeq" id="XP_011241480.1">
    <property type="nucleotide sequence ID" value="XM_011243178.2"/>
</dbReference>
<dbReference type="RefSeq" id="XP_011241481.1">
    <property type="nucleotide sequence ID" value="XM_011243179.1"/>
</dbReference>
<dbReference type="SMR" id="Q9CZQ6"/>
<dbReference type="FunCoup" id="Q9CZQ6">
    <property type="interactions" value="119"/>
</dbReference>
<dbReference type="STRING" id="10090.ENSMUSP00000138022"/>
<dbReference type="GlyCosmos" id="Q9CZQ6">
    <property type="glycosylation" value="5 sites, No reported glycans"/>
</dbReference>
<dbReference type="GlyGen" id="Q9CZQ6">
    <property type="glycosylation" value="5 sites"/>
</dbReference>
<dbReference type="iPTMnet" id="Q9CZQ6"/>
<dbReference type="PhosphoSitePlus" id="Q9CZQ6"/>
<dbReference type="PaxDb" id="10090-ENSMUSP00000138022"/>
<dbReference type="PeptideAtlas" id="Q9CZQ6"/>
<dbReference type="ProteomicsDB" id="253166"/>
<dbReference type="DNASU" id="379043"/>
<dbReference type="Ensembl" id="ENSMUST00000065527.11">
    <property type="protein sequence ID" value="ENSMUSP00000066627.5"/>
    <property type="gene ID" value="ENSMUSG00000053219.16"/>
</dbReference>
<dbReference type="Ensembl" id="ENSMUST00000178026.2">
    <property type="protein sequence ID" value="ENSMUSP00000136032.2"/>
    <property type="gene ID" value="ENSMUSG00000053219.16"/>
</dbReference>
<dbReference type="Ensembl" id="ENSMUST00000181645.8">
    <property type="protein sequence ID" value="ENSMUSP00000138022.2"/>
    <property type="gene ID" value="ENSMUSG00000053219.16"/>
</dbReference>
<dbReference type="GeneID" id="379043"/>
<dbReference type="KEGG" id="mmu:379043"/>
<dbReference type="UCSC" id="uc007epd.1">
    <property type="organism name" value="mouse"/>
</dbReference>
<dbReference type="AGR" id="MGI:2675273"/>
<dbReference type="CTD" id="135250"/>
<dbReference type="MGI" id="MGI:2675273">
    <property type="gene designation" value="Raet1e"/>
</dbReference>
<dbReference type="VEuPathDB" id="HostDB:ENSMUSG00000053219"/>
<dbReference type="GeneTree" id="ENSGT01120000271825"/>
<dbReference type="HOGENOM" id="CLU_1115463_0_0_1"/>
<dbReference type="InParanoid" id="Q9CZQ6"/>
<dbReference type="OMA" id="DAMNMNW"/>
<dbReference type="OrthoDB" id="9531345at2759"/>
<dbReference type="PhylomeDB" id="Q9CZQ6"/>
<dbReference type="TreeFam" id="TF339658"/>
<dbReference type="Reactome" id="R-MMU-198933">
    <property type="pathway name" value="Immunoregulatory interactions between a Lymphoid and a non-Lymphoid cell"/>
</dbReference>
<dbReference type="BioGRID-ORCS" id="379043">
    <property type="hits" value="0 hits in 75 CRISPR screens"/>
</dbReference>
<dbReference type="ChiTaRS" id="Raet1e">
    <property type="organism name" value="mouse"/>
</dbReference>
<dbReference type="PRO" id="PR:Q9CZQ6"/>
<dbReference type="Proteomes" id="UP000000589">
    <property type="component" value="Chromosome 10"/>
</dbReference>
<dbReference type="RNAct" id="Q9CZQ6">
    <property type="molecule type" value="protein"/>
</dbReference>
<dbReference type="Bgee" id="ENSMUSG00000053219">
    <property type="expression patterns" value="Expressed in secondary oocyte and 53 other cell types or tissues"/>
</dbReference>
<dbReference type="ExpressionAtlas" id="Q9CZQ6">
    <property type="expression patterns" value="baseline and differential"/>
</dbReference>
<dbReference type="GO" id="GO:0005886">
    <property type="term" value="C:plasma membrane"/>
    <property type="evidence" value="ECO:0000250"/>
    <property type="project" value="UniProtKB"/>
</dbReference>
<dbReference type="GO" id="GO:0098552">
    <property type="term" value="C:side of membrane"/>
    <property type="evidence" value="ECO:0007669"/>
    <property type="project" value="UniProtKB-KW"/>
</dbReference>
<dbReference type="GO" id="GO:0046703">
    <property type="term" value="F:natural killer cell lectin-like receptor binding"/>
    <property type="evidence" value="ECO:0000314"/>
    <property type="project" value="UniProtKB"/>
</dbReference>
<dbReference type="GO" id="GO:0045954">
    <property type="term" value="P:positive regulation of natural killer cell mediated cytotoxicity"/>
    <property type="evidence" value="ECO:0000250"/>
    <property type="project" value="UniProtKB"/>
</dbReference>
<dbReference type="GO" id="GO:0001913">
    <property type="term" value="P:T cell mediated cytotoxicity"/>
    <property type="evidence" value="ECO:0000314"/>
    <property type="project" value="MGI"/>
</dbReference>
<dbReference type="FunFam" id="3.30.500.10:FF:000004">
    <property type="entry name" value="Retinoic acid early-inducible protein 1-beta"/>
    <property type="match status" value="1"/>
</dbReference>
<dbReference type="Gene3D" id="3.30.500.10">
    <property type="entry name" value="MHC class I-like antigen recognition-like"/>
    <property type="match status" value="1"/>
</dbReference>
<dbReference type="InterPro" id="IPR050208">
    <property type="entry name" value="MHC_class-I_related"/>
</dbReference>
<dbReference type="InterPro" id="IPR037055">
    <property type="entry name" value="MHC_I-like_Ag-recog_sf"/>
</dbReference>
<dbReference type="InterPro" id="IPR011162">
    <property type="entry name" value="MHC_I/II-like_Ag-recog"/>
</dbReference>
<dbReference type="InterPro" id="IPR029287">
    <property type="entry name" value="RAE-1"/>
</dbReference>
<dbReference type="PANTHER" id="PTHR16675">
    <property type="entry name" value="MHC CLASS I-RELATED"/>
    <property type="match status" value="1"/>
</dbReference>
<dbReference type="PANTHER" id="PTHR16675:SF64">
    <property type="entry name" value="RETINOIC ACID EARLY TRANSCRIPT 1E"/>
    <property type="match status" value="1"/>
</dbReference>
<dbReference type="Pfam" id="PF14586">
    <property type="entry name" value="MHC_I_2"/>
    <property type="match status" value="1"/>
</dbReference>
<dbReference type="SUPFAM" id="SSF54452">
    <property type="entry name" value="MHC antigen-recognition domain"/>
    <property type="match status" value="1"/>
</dbReference>
<name>RAE1E_MOUSE</name>
<proteinExistence type="evidence at protein level"/>
<sequence>MAKAAVTKRHHFMIQKLLILLSYGYTNGLDDAHSLRCNLTIKDPTSADLPWCDVKCSVDEITILHLNNINKTMTSGDPGKMANATGKCLTQPLNDLCQELRDKVSNTKVDTHKTNGYPHLQVTMIYPQSQGQTPSATWEFNISDSYFFTFYTENMSWRSANDESGVIMNKWKDDGDLVQQLKYFIPQCRQKIDEFLKQSKEKPRSTSRSPSITQLTSTSPLPPPSHSTSKKGFISVGLIFISLLFAFAFAM</sequence>
<accession>Q9CZQ6</accession>
<accession>A2RSZ5</accession>
<protein>
    <recommendedName>
        <fullName>Retinoic acid early-inducible protein 1-epsilon</fullName>
        <shortName>RAE-1-epsilon</shortName>
    </recommendedName>
</protein>
<comment type="function">
    <text evidence="5 6">Acts as a ligand for KLRK1.</text>
</comment>
<comment type="subcellular location">
    <subcellularLocation>
        <location evidence="1">Cell membrane</location>
        <topology evidence="1">Lipid-anchor</topology>
        <topology evidence="1">GPI-anchor</topology>
    </subcellularLocation>
</comment>
<comment type="induction">
    <text evidence="2">By retinoic acid.</text>
</comment>
<comment type="PTM">
    <text evidence="2">Glycosylated.</text>
</comment>
<comment type="similarity">
    <text evidence="7">Belongs to the NKG2D ligand family.</text>
</comment>
<organism evidence="10">
    <name type="scientific">Mus musculus</name>
    <name type="common">Mouse</name>
    <dbReference type="NCBI Taxonomy" id="10090"/>
    <lineage>
        <taxon>Eukaryota</taxon>
        <taxon>Metazoa</taxon>
        <taxon>Chordata</taxon>
        <taxon>Craniata</taxon>
        <taxon>Vertebrata</taxon>
        <taxon>Euteleostomi</taxon>
        <taxon>Mammalia</taxon>
        <taxon>Eutheria</taxon>
        <taxon>Euarchontoglires</taxon>
        <taxon>Glires</taxon>
        <taxon>Rodentia</taxon>
        <taxon>Myomorpha</taxon>
        <taxon>Muroidea</taxon>
        <taxon>Muridae</taxon>
        <taxon>Murinae</taxon>
        <taxon>Mus</taxon>
        <taxon>Mus</taxon>
    </lineage>
</organism>
<evidence type="ECO:0000250" key="1"/>
<evidence type="ECO:0000250" key="2">
    <source>
        <dbReference type="UniProtKB" id="O08603"/>
    </source>
</evidence>
<evidence type="ECO:0000255" key="3"/>
<evidence type="ECO:0000256" key="4">
    <source>
        <dbReference type="SAM" id="MobiDB-lite"/>
    </source>
</evidence>
<evidence type="ECO:0000269" key="5">
    <source>
    </source>
</evidence>
<evidence type="ECO:0000269" key="6">
    <source>
    </source>
</evidence>
<evidence type="ECO:0000305" key="7"/>
<evidence type="ECO:0000312" key="8">
    <source>
        <dbReference type="EMBL" id="AAL11004.1"/>
    </source>
</evidence>
<evidence type="ECO:0000312" key="9">
    <source>
        <dbReference type="EMBL" id="AAL17719.1"/>
    </source>
</evidence>
<evidence type="ECO:0000312" key="10">
    <source>
        <dbReference type="EMBL" id="BAB28147.1"/>
    </source>
</evidence>